<comment type="function">
    <text evidence="3">Mediates the hydrolysis of diadenosine 5',5''-P(1)P(4) tetraphosphate (Ap(4)A), a signaling molecule involved in regulation of DNA replication and repair.</text>
</comment>
<comment type="catalytic activity">
    <reaction evidence="3">
        <text>P(1),P(4)-bis(5'-guanosyl) tetraphosphate + H2O = GMP + GTP + 2 H(+)</text>
        <dbReference type="Rhea" id="RHEA:22484"/>
        <dbReference type="ChEBI" id="CHEBI:15377"/>
        <dbReference type="ChEBI" id="CHEBI:15378"/>
        <dbReference type="ChEBI" id="CHEBI:37565"/>
        <dbReference type="ChEBI" id="CHEBI:57553"/>
        <dbReference type="ChEBI" id="CHEBI:58115"/>
        <dbReference type="EC" id="3.6.1.17"/>
    </reaction>
</comment>
<comment type="cofactor">
    <cofactor evidence="3">
        <name>Mn(2+)</name>
        <dbReference type="ChEBI" id="CHEBI:29035"/>
    </cofactor>
</comment>
<comment type="biophysicochemical properties">
    <phDependence>
        <text evidence="3">Optimum pH is 8.0. Active from pH 6.8 to 9.5.</text>
    </phDependence>
</comment>
<comment type="disruption phenotype">
    <text evidence="4">No visible phenotype under normal growth conditions.</text>
</comment>
<comment type="similarity">
    <text evidence="7">Belongs to the Nudix hydrolase family.</text>
</comment>
<sequence>MENLPPGYRPNVGVCLINSDNLVFVASRLNVPGAWQMPQGGIEDGEDPKSAAMRELQEETGVVSAEIVSEVPNWLTYDFPPAVKAKVNRLWGGEWHGQAQKWYLVRLRNDEDEKEINLANNEADSEFAEWKWAKPEEVVEQAVDYKRPTYEEVIKTFGSFLNDTGRAAKCKSAKW</sequence>
<dbReference type="EC" id="3.6.1.17" evidence="3"/>
<dbReference type="EMBL" id="AC074176">
    <property type="protein sequence ID" value="AAG50852.1"/>
    <property type="molecule type" value="Genomic_DNA"/>
</dbReference>
<dbReference type="EMBL" id="CP002684">
    <property type="protein sequence ID" value="AEE31179.1"/>
    <property type="molecule type" value="Genomic_DNA"/>
</dbReference>
<dbReference type="EMBL" id="CP002684">
    <property type="protein sequence ID" value="AEE31180.1"/>
    <property type="molecule type" value="Genomic_DNA"/>
</dbReference>
<dbReference type="EMBL" id="AY087445">
    <property type="protein sequence ID" value="AAM64991.1"/>
    <property type="molecule type" value="mRNA"/>
</dbReference>
<dbReference type="EMBL" id="BT025530">
    <property type="protein sequence ID" value="ABF58948.1"/>
    <property type="molecule type" value="mRNA"/>
</dbReference>
<dbReference type="EMBL" id="AK229734">
    <property type="protein sequence ID" value="BAF01571.1"/>
    <property type="molecule type" value="mRNA"/>
</dbReference>
<dbReference type="PIR" id="B86425">
    <property type="entry name" value="B86425"/>
</dbReference>
<dbReference type="RefSeq" id="NP_001185114.1">
    <property type="nucleotide sequence ID" value="NM_001198185.1"/>
</dbReference>
<dbReference type="RefSeq" id="NP_174303.1">
    <property type="nucleotide sequence ID" value="NM_102750.5"/>
</dbReference>
<dbReference type="SMR" id="Q9C6Z2"/>
<dbReference type="FunCoup" id="Q9C6Z2">
    <property type="interactions" value="39"/>
</dbReference>
<dbReference type="STRING" id="3702.Q9C6Z2"/>
<dbReference type="PaxDb" id="3702-AT1G30110.1"/>
<dbReference type="ProteomicsDB" id="234941"/>
<dbReference type="EnsemblPlants" id="AT1G30110.1">
    <property type="protein sequence ID" value="AT1G30110.1"/>
    <property type="gene ID" value="AT1G30110"/>
</dbReference>
<dbReference type="EnsemblPlants" id="AT1G30110.2">
    <property type="protein sequence ID" value="AT1G30110.2"/>
    <property type="gene ID" value="AT1G30110"/>
</dbReference>
<dbReference type="GeneID" id="839890"/>
<dbReference type="Gramene" id="AT1G30110.1">
    <property type="protein sequence ID" value="AT1G30110.1"/>
    <property type="gene ID" value="AT1G30110"/>
</dbReference>
<dbReference type="Gramene" id="AT1G30110.2">
    <property type="protein sequence ID" value="AT1G30110.2"/>
    <property type="gene ID" value="AT1G30110"/>
</dbReference>
<dbReference type="KEGG" id="ath:AT1G30110"/>
<dbReference type="Araport" id="AT1G30110"/>
<dbReference type="TAIR" id="AT1G30110">
    <property type="gene designation" value="NUDX25"/>
</dbReference>
<dbReference type="eggNOG" id="ENOG502QRQY">
    <property type="taxonomic scope" value="Eukaryota"/>
</dbReference>
<dbReference type="HOGENOM" id="CLU_087195_3_0_1"/>
<dbReference type="InParanoid" id="Q9C6Z2"/>
<dbReference type="OMA" id="PCVGIML"/>
<dbReference type="OrthoDB" id="276276at2759"/>
<dbReference type="PhylomeDB" id="Q9C6Z2"/>
<dbReference type="BioCyc" id="ARA:AT1G30110-MONOMER"/>
<dbReference type="BRENDA" id="3.6.1.17">
    <property type="organism ID" value="399"/>
</dbReference>
<dbReference type="SABIO-RK" id="Q9C6Z2"/>
<dbReference type="PRO" id="PR:Q9C6Z2"/>
<dbReference type="Proteomes" id="UP000006548">
    <property type="component" value="Chromosome 1"/>
</dbReference>
<dbReference type="ExpressionAtlas" id="Q9C6Z2">
    <property type="expression patterns" value="baseline and differential"/>
</dbReference>
<dbReference type="GO" id="GO:0004081">
    <property type="term" value="F:bis(5'-nucleosyl)-tetraphosphatase (asymmetrical) activity"/>
    <property type="evidence" value="ECO:0000314"/>
    <property type="project" value="TAIR"/>
</dbReference>
<dbReference type="GO" id="GO:0008893">
    <property type="term" value="F:guanosine-3',5'-bis(diphosphate) 3'-diphosphatase activity"/>
    <property type="evidence" value="ECO:0000314"/>
    <property type="project" value="TAIR"/>
</dbReference>
<dbReference type="GO" id="GO:0046872">
    <property type="term" value="F:metal ion binding"/>
    <property type="evidence" value="ECO:0007669"/>
    <property type="project" value="UniProtKB-KW"/>
</dbReference>
<dbReference type="GO" id="GO:0015967">
    <property type="term" value="P:diadenosine tetraphosphate catabolic process"/>
    <property type="evidence" value="ECO:0000314"/>
    <property type="project" value="TAIR"/>
</dbReference>
<dbReference type="GO" id="GO:0006753">
    <property type="term" value="P:nucleoside phosphate metabolic process"/>
    <property type="evidence" value="ECO:0000314"/>
    <property type="project" value="TAIR"/>
</dbReference>
<dbReference type="CDD" id="cd03671">
    <property type="entry name" value="NUDIX_Ap4A_hydrolase_plant_like"/>
    <property type="match status" value="1"/>
</dbReference>
<dbReference type="FunFam" id="3.90.79.10:FF:000032">
    <property type="entry name" value="Nudix hydrolase 25"/>
    <property type="match status" value="1"/>
</dbReference>
<dbReference type="Gene3D" id="3.90.79.10">
    <property type="entry name" value="Nucleoside Triphosphate Pyrophosphohydrolase"/>
    <property type="match status" value="1"/>
</dbReference>
<dbReference type="HAMAP" id="MF_00298">
    <property type="entry name" value="Nudix_RppH"/>
    <property type="match status" value="1"/>
</dbReference>
<dbReference type="InterPro" id="IPR020476">
    <property type="entry name" value="Nudix_hydrolase"/>
</dbReference>
<dbReference type="InterPro" id="IPR015797">
    <property type="entry name" value="NUDIX_hydrolase-like_dom_sf"/>
</dbReference>
<dbReference type="InterPro" id="IPR020084">
    <property type="entry name" value="NUDIX_hydrolase_CS"/>
</dbReference>
<dbReference type="InterPro" id="IPR000086">
    <property type="entry name" value="NUDIX_hydrolase_dom"/>
</dbReference>
<dbReference type="InterPro" id="IPR022927">
    <property type="entry name" value="RppH"/>
</dbReference>
<dbReference type="NCBIfam" id="NF001936">
    <property type="entry name" value="PRK00714.1-3"/>
    <property type="match status" value="1"/>
</dbReference>
<dbReference type="NCBIfam" id="NF001938">
    <property type="entry name" value="PRK00714.1-5"/>
    <property type="match status" value="1"/>
</dbReference>
<dbReference type="PANTHER" id="PTHR11839:SF30">
    <property type="entry name" value="NUDIX HYDROLASE 25"/>
    <property type="match status" value="1"/>
</dbReference>
<dbReference type="PANTHER" id="PTHR11839">
    <property type="entry name" value="UDP/ADP-SUGAR PYROPHOSPHATASE"/>
    <property type="match status" value="1"/>
</dbReference>
<dbReference type="Pfam" id="PF00293">
    <property type="entry name" value="NUDIX"/>
    <property type="match status" value="1"/>
</dbReference>
<dbReference type="PRINTS" id="PR00502">
    <property type="entry name" value="NUDIXFAMILY"/>
</dbReference>
<dbReference type="SUPFAM" id="SSF55811">
    <property type="entry name" value="Nudix"/>
    <property type="match status" value="1"/>
</dbReference>
<dbReference type="PROSITE" id="PS51462">
    <property type="entry name" value="NUDIX"/>
    <property type="match status" value="1"/>
</dbReference>
<dbReference type="PROSITE" id="PS00893">
    <property type="entry name" value="NUDIX_BOX"/>
    <property type="match status" value="1"/>
</dbReference>
<accession>Q9C6Z2</accession>
<accession>Q0WMS9</accession>
<organism>
    <name type="scientific">Arabidopsis thaliana</name>
    <name type="common">Mouse-ear cress</name>
    <dbReference type="NCBI Taxonomy" id="3702"/>
    <lineage>
        <taxon>Eukaryota</taxon>
        <taxon>Viridiplantae</taxon>
        <taxon>Streptophyta</taxon>
        <taxon>Embryophyta</taxon>
        <taxon>Tracheophyta</taxon>
        <taxon>Spermatophyta</taxon>
        <taxon>Magnoliopsida</taxon>
        <taxon>eudicotyledons</taxon>
        <taxon>Gunneridae</taxon>
        <taxon>Pentapetalae</taxon>
        <taxon>rosids</taxon>
        <taxon>malvids</taxon>
        <taxon>Brassicales</taxon>
        <taxon>Brassicaceae</taxon>
        <taxon>Camelineae</taxon>
        <taxon>Arabidopsis</taxon>
    </lineage>
</organism>
<keyword id="KW-0378">Hydrolase</keyword>
<keyword id="KW-0460">Magnesium</keyword>
<keyword id="KW-0464">Manganese</keyword>
<keyword id="KW-0479">Metal-binding</keyword>
<keyword id="KW-1185">Reference proteome</keyword>
<protein>
    <recommendedName>
        <fullName evidence="5 6">Nudix hydrolase 25</fullName>
        <shortName evidence="5">AtNUDT25</shortName>
        <shortName evidence="5 6">AtNUDX25</shortName>
        <ecNumber evidence="3">3.6.1.17</ecNumber>
    </recommendedName>
    <alternativeName>
        <fullName evidence="5">Bis(5'-nucleosyl)-tetraphosphatase (asymmetrical)</fullName>
    </alternativeName>
</protein>
<reference key="1">
    <citation type="journal article" date="2000" name="Nature">
        <title>Sequence and analysis of chromosome 1 of the plant Arabidopsis thaliana.</title>
        <authorList>
            <person name="Theologis A."/>
            <person name="Ecker J.R."/>
            <person name="Palm C.J."/>
            <person name="Federspiel N.A."/>
            <person name="Kaul S."/>
            <person name="White O."/>
            <person name="Alonso J."/>
            <person name="Altafi H."/>
            <person name="Araujo R."/>
            <person name="Bowman C.L."/>
            <person name="Brooks S.Y."/>
            <person name="Buehler E."/>
            <person name="Chan A."/>
            <person name="Chao Q."/>
            <person name="Chen H."/>
            <person name="Cheuk R.F."/>
            <person name="Chin C.W."/>
            <person name="Chung M.K."/>
            <person name="Conn L."/>
            <person name="Conway A.B."/>
            <person name="Conway A.R."/>
            <person name="Creasy T.H."/>
            <person name="Dewar K."/>
            <person name="Dunn P."/>
            <person name="Etgu P."/>
            <person name="Feldblyum T.V."/>
            <person name="Feng J.-D."/>
            <person name="Fong B."/>
            <person name="Fujii C.Y."/>
            <person name="Gill J.E."/>
            <person name="Goldsmith A.D."/>
            <person name="Haas B."/>
            <person name="Hansen N.F."/>
            <person name="Hughes B."/>
            <person name="Huizar L."/>
            <person name="Hunter J.L."/>
            <person name="Jenkins J."/>
            <person name="Johnson-Hopson C."/>
            <person name="Khan S."/>
            <person name="Khaykin E."/>
            <person name="Kim C.J."/>
            <person name="Koo H.L."/>
            <person name="Kremenetskaia I."/>
            <person name="Kurtz D.B."/>
            <person name="Kwan A."/>
            <person name="Lam B."/>
            <person name="Langin-Hooper S."/>
            <person name="Lee A."/>
            <person name="Lee J.M."/>
            <person name="Lenz C.A."/>
            <person name="Li J.H."/>
            <person name="Li Y.-P."/>
            <person name="Lin X."/>
            <person name="Liu S.X."/>
            <person name="Liu Z.A."/>
            <person name="Luros J.S."/>
            <person name="Maiti R."/>
            <person name="Marziali A."/>
            <person name="Militscher J."/>
            <person name="Miranda M."/>
            <person name="Nguyen M."/>
            <person name="Nierman W.C."/>
            <person name="Osborne B.I."/>
            <person name="Pai G."/>
            <person name="Peterson J."/>
            <person name="Pham P.K."/>
            <person name="Rizzo M."/>
            <person name="Rooney T."/>
            <person name="Rowley D."/>
            <person name="Sakano H."/>
            <person name="Salzberg S.L."/>
            <person name="Schwartz J.R."/>
            <person name="Shinn P."/>
            <person name="Southwick A.M."/>
            <person name="Sun H."/>
            <person name="Tallon L.J."/>
            <person name="Tambunga G."/>
            <person name="Toriumi M.J."/>
            <person name="Town C.D."/>
            <person name="Utterback T."/>
            <person name="Van Aken S."/>
            <person name="Vaysberg M."/>
            <person name="Vysotskaia V.S."/>
            <person name="Walker M."/>
            <person name="Wu D."/>
            <person name="Yu G."/>
            <person name="Fraser C.M."/>
            <person name="Venter J.C."/>
            <person name="Davis R.W."/>
        </authorList>
    </citation>
    <scope>NUCLEOTIDE SEQUENCE [LARGE SCALE GENOMIC DNA]</scope>
    <source>
        <strain>cv. Columbia</strain>
    </source>
</reference>
<reference key="2">
    <citation type="journal article" date="2017" name="Plant J.">
        <title>Araport11: a complete reannotation of the Arabidopsis thaliana reference genome.</title>
        <authorList>
            <person name="Cheng C.Y."/>
            <person name="Krishnakumar V."/>
            <person name="Chan A.P."/>
            <person name="Thibaud-Nissen F."/>
            <person name="Schobel S."/>
            <person name="Town C.D."/>
        </authorList>
    </citation>
    <scope>GENOME REANNOTATION</scope>
    <source>
        <strain>cv. Columbia</strain>
    </source>
</reference>
<reference key="3">
    <citation type="submission" date="2006-05" db="EMBL/GenBank/DDBJ databases">
        <title>Arabidopsis ORF clones.</title>
        <authorList>
            <person name="Kim C.J."/>
            <person name="Chen H."/>
            <person name="Quinitio C."/>
            <person name="Shinn P."/>
            <person name="Ecker J.R."/>
        </authorList>
    </citation>
    <scope>NUCLEOTIDE SEQUENCE [LARGE SCALE MRNA]</scope>
    <source>
        <strain>cv. Columbia</strain>
    </source>
</reference>
<reference key="4">
    <citation type="submission" date="2002-03" db="EMBL/GenBank/DDBJ databases">
        <title>Full-length cDNA from Arabidopsis thaliana.</title>
        <authorList>
            <person name="Brover V.V."/>
            <person name="Troukhan M.E."/>
            <person name="Alexandrov N.A."/>
            <person name="Lu Y.-P."/>
            <person name="Flavell R.B."/>
            <person name="Feldmann K.A."/>
        </authorList>
    </citation>
    <scope>NUCLEOTIDE SEQUENCE [LARGE SCALE MRNA]</scope>
</reference>
<reference key="5">
    <citation type="submission" date="2006-07" db="EMBL/GenBank/DDBJ databases">
        <title>Large-scale analysis of RIKEN Arabidopsis full-length (RAFL) cDNAs.</title>
        <authorList>
            <person name="Totoki Y."/>
            <person name="Seki M."/>
            <person name="Ishida J."/>
            <person name="Nakajima M."/>
            <person name="Enju A."/>
            <person name="Kamiya A."/>
            <person name="Narusaka M."/>
            <person name="Shin-i T."/>
            <person name="Nakagawa M."/>
            <person name="Sakamoto N."/>
            <person name="Oishi K."/>
            <person name="Kohara Y."/>
            <person name="Kobayashi M."/>
            <person name="Toyoda A."/>
            <person name="Sakaki Y."/>
            <person name="Sakurai T."/>
            <person name="Iida K."/>
            <person name="Akiyama K."/>
            <person name="Satou M."/>
            <person name="Toyoda T."/>
            <person name="Konagaya A."/>
            <person name="Carninci P."/>
            <person name="Kawai J."/>
            <person name="Hayashizaki Y."/>
            <person name="Shinozaki K."/>
        </authorList>
    </citation>
    <scope>NUCLEOTIDE SEQUENCE [LARGE SCALE MRNA] OF 75-175</scope>
    <source>
        <strain>cv. Columbia</strain>
    </source>
</reference>
<reference key="6">
    <citation type="journal article" date="2008" name="Plant Physiol.">
        <title>Molecular characterization of organelle-type Nudix hydrolases in Arabidopsis.</title>
        <authorList>
            <person name="Ogawa T."/>
            <person name="Yoshimura K."/>
            <person name="Miyake H."/>
            <person name="Ishikawa K."/>
            <person name="Ito D."/>
            <person name="Tanabe N."/>
            <person name="Shigeoka S."/>
        </authorList>
    </citation>
    <scope>NOMENCLATURE</scope>
    <scope>DISRUPTION PHENOTYPE</scope>
</reference>
<reference key="7">
    <citation type="journal article" date="2008" name="Acta Biochim. Pol.">
        <title>A diadenosine 5',5''-P1P4 tetraphosphate (Ap4A) hydrolase from Arabidopsis thaliana that is activated preferentially by Mn2+ ions.</title>
        <authorList>
            <person name="Szurmak B."/>
            <person name="Wyslouch-Cieszynska A."/>
            <person name="Wszelaka-Rylik M."/>
            <person name="Bal W."/>
            <person name="Dobrzanska M."/>
        </authorList>
    </citation>
    <scope>FUNCTION</scope>
    <scope>COFACTOR</scope>
    <scope>BIOPHYSICOCHEMICAL PROPERTIES</scope>
    <scope>CATALYTIC ACTIVITY</scope>
</reference>
<gene>
    <name evidence="5" type="primary">NUDT25</name>
    <name evidence="5 6" type="synonym">NUDX25</name>
    <name evidence="8" type="ordered locus">At1g30110</name>
    <name evidence="9" type="ORF">T2H7.9</name>
</gene>
<name>NUD25_ARATH</name>
<evidence type="ECO:0000250" key="1">
    <source>
        <dbReference type="UniProtKB" id="Q96DE0"/>
    </source>
</evidence>
<evidence type="ECO:0000255" key="2">
    <source>
        <dbReference type="PROSITE-ProRule" id="PRU00794"/>
    </source>
</evidence>
<evidence type="ECO:0000269" key="3">
    <source>
    </source>
</evidence>
<evidence type="ECO:0000269" key="4">
    <source>
    </source>
</evidence>
<evidence type="ECO:0000303" key="5">
    <source>
    </source>
</evidence>
<evidence type="ECO:0000303" key="6">
    <source>
    </source>
</evidence>
<evidence type="ECO:0000305" key="7"/>
<evidence type="ECO:0000312" key="8">
    <source>
        <dbReference type="Araport" id="AT1G30110"/>
    </source>
</evidence>
<evidence type="ECO:0000312" key="9">
    <source>
        <dbReference type="EMBL" id="AAG50852.1"/>
    </source>
</evidence>
<proteinExistence type="evidence at protein level"/>
<feature type="chain" id="PRO_0000378337" description="Nudix hydrolase 25">
    <location>
        <begin position="1"/>
        <end position="175"/>
    </location>
</feature>
<feature type="domain" description="Nudix hydrolase" evidence="2">
    <location>
        <begin position="7"/>
        <end position="155"/>
    </location>
</feature>
<feature type="short sequence motif" description="Nudix box" evidence="2">
    <location>
        <begin position="40"/>
        <end position="61"/>
    </location>
</feature>
<feature type="binding site" evidence="1">
    <location>
        <position position="40"/>
    </location>
    <ligand>
        <name>Mn(2+)</name>
        <dbReference type="ChEBI" id="CHEBI:29035"/>
    </ligand>
</feature>
<feature type="binding site" evidence="1">
    <location>
        <position position="55"/>
    </location>
    <ligand>
        <name>Mn(2+)</name>
        <dbReference type="ChEBI" id="CHEBI:29035"/>
    </ligand>
</feature>
<feature type="binding site" evidence="1">
    <location>
        <position position="59"/>
    </location>
    <ligand>
        <name>Mn(2+)</name>
        <dbReference type="ChEBI" id="CHEBI:29035"/>
    </ligand>
</feature>